<dbReference type="EC" id="2.1.1.170" evidence="1"/>
<dbReference type="EMBL" id="CP000510">
    <property type="protein sequence ID" value="ABM05414.1"/>
    <property type="molecule type" value="Genomic_DNA"/>
</dbReference>
<dbReference type="RefSeq" id="WP_011771962.1">
    <property type="nucleotide sequence ID" value="NC_008709.1"/>
</dbReference>
<dbReference type="SMR" id="A1T0Z9"/>
<dbReference type="STRING" id="357804.Ping_3740"/>
<dbReference type="KEGG" id="pin:Ping_3740"/>
<dbReference type="eggNOG" id="COG0357">
    <property type="taxonomic scope" value="Bacteria"/>
</dbReference>
<dbReference type="HOGENOM" id="CLU_065341_2_2_6"/>
<dbReference type="OrthoDB" id="9808773at2"/>
<dbReference type="Proteomes" id="UP000000639">
    <property type="component" value="Chromosome"/>
</dbReference>
<dbReference type="GO" id="GO:0005829">
    <property type="term" value="C:cytosol"/>
    <property type="evidence" value="ECO:0007669"/>
    <property type="project" value="TreeGrafter"/>
</dbReference>
<dbReference type="GO" id="GO:0070043">
    <property type="term" value="F:rRNA (guanine-N7-)-methyltransferase activity"/>
    <property type="evidence" value="ECO:0007669"/>
    <property type="project" value="UniProtKB-UniRule"/>
</dbReference>
<dbReference type="CDD" id="cd02440">
    <property type="entry name" value="AdoMet_MTases"/>
    <property type="match status" value="1"/>
</dbReference>
<dbReference type="FunFam" id="3.40.50.150:FF:000032">
    <property type="entry name" value="Ribosomal RNA small subunit methyltransferase G"/>
    <property type="match status" value="1"/>
</dbReference>
<dbReference type="Gene3D" id="3.40.50.150">
    <property type="entry name" value="Vaccinia Virus protein VP39"/>
    <property type="match status" value="1"/>
</dbReference>
<dbReference type="HAMAP" id="MF_00074">
    <property type="entry name" value="16SrRNA_methyltr_G"/>
    <property type="match status" value="1"/>
</dbReference>
<dbReference type="InterPro" id="IPR003682">
    <property type="entry name" value="rRNA_ssu_MeTfrase_G"/>
</dbReference>
<dbReference type="InterPro" id="IPR029063">
    <property type="entry name" value="SAM-dependent_MTases_sf"/>
</dbReference>
<dbReference type="NCBIfam" id="TIGR00138">
    <property type="entry name" value="rsmG_gidB"/>
    <property type="match status" value="1"/>
</dbReference>
<dbReference type="PANTHER" id="PTHR31760">
    <property type="entry name" value="S-ADENOSYL-L-METHIONINE-DEPENDENT METHYLTRANSFERASES SUPERFAMILY PROTEIN"/>
    <property type="match status" value="1"/>
</dbReference>
<dbReference type="PANTHER" id="PTHR31760:SF0">
    <property type="entry name" value="S-ADENOSYL-L-METHIONINE-DEPENDENT METHYLTRANSFERASES SUPERFAMILY PROTEIN"/>
    <property type="match status" value="1"/>
</dbReference>
<dbReference type="Pfam" id="PF02527">
    <property type="entry name" value="GidB"/>
    <property type="match status" value="1"/>
</dbReference>
<dbReference type="PIRSF" id="PIRSF003078">
    <property type="entry name" value="GidB"/>
    <property type="match status" value="1"/>
</dbReference>
<dbReference type="SUPFAM" id="SSF53335">
    <property type="entry name" value="S-adenosyl-L-methionine-dependent methyltransferases"/>
    <property type="match status" value="1"/>
</dbReference>
<comment type="function">
    <text evidence="1">Specifically methylates the N7 position of guanine in position 527 of 16S rRNA.</text>
</comment>
<comment type="catalytic activity">
    <reaction evidence="1">
        <text>guanosine(527) in 16S rRNA + S-adenosyl-L-methionine = N(7)-methylguanosine(527) in 16S rRNA + S-adenosyl-L-homocysteine</text>
        <dbReference type="Rhea" id="RHEA:42732"/>
        <dbReference type="Rhea" id="RHEA-COMP:10209"/>
        <dbReference type="Rhea" id="RHEA-COMP:10210"/>
        <dbReference type="ChEBI" id="CHEBI:57856"/>
        <dbReference type="ChEBI" id="CHEBI:59789"/>
        <dbReference type="ChEBI" id="CHEBI:74269"/>
        <dbReference type="ChEBI" id="CHEBI:74480"/>
        <dbReference type="EC" id="2.1.1.170"/>
    </reaction>
</comment>
<comment type="subcellular location">
    <subcellularLocation>
        <location evidence="1">Cytoplasm</location>
    </subcellularLocation>
</comment>
<comment type="similarity">
    <text evidence="1">Belongs to the methyltransferase superfamily. RNA methyltransferase RsmG family.</text>
</comment>
<reference key="1">
    <citation type="journal article" date="2008" name="BMC Genomics">
        <title>Genomics of an extreme psychrophile, Psychromonas ingrahamii.</title>
        <authorList>
            <person name="Riley M."/>
            <person name="Staley J.T."/>
            <person name="Danchin A."/>
            <person name="Wang T.Z."/>
            <person name="Brettin T.S."/>
            <person name="Hauser L.J."/>
            <person name="Land M.L."/>
            <person name="Thompson L.S."/>
        </authorList>
    </citation>
    <scope>NUCLEOTIDE SEQUENCE [LARGE SCALE GENOMIC DNA]</scope>
    <source>
        <strain>DSM 17664 / CCUG 51855 / 37</strain>
    </source>
</reference>
<sequence length="207" mass="23784">MSLLENLQKLIDQTSLEVTDQQKQQLVQLVELLNKWNKAYNLTSVRDPEQMLVKHIMDSIVVSPYLIGERFIDVGTGPGLPGLPLAILNPDKQFVLLDSLGKRLRFIRQALLELGLKNVTAVQSRVEEYQPEHKFDVVLSRAFASLHDMLYWCKHLPHEEGHFLALKGQFPAQEIKELDKEFEFVESISLQVPTLEGERCLVKIKRI</sequence>
<feature type="chain" id="PRO_0000335406" description="Ribosomal RNA small subunit methyltransferase G">
    <location>
        <begin position="1"/>
        <end position="207"/>
    </location>
</feature>
<feature type="binding site" evidence="1">
    <location>
        <position position="75"/>
    </location>
    <ligand>
        <name>S-adenosyl-L-methionine</name>
        <dbReference type="ChEBI" id="CHEBI:59789"/>
    </ligand>
</feature>
<feature type="binding site" evidence="1">
    <location>
        <position position="80"/>
    </location>
    <ligand>
        <name>S-adenosyl-L-methionine</name>
        <dbReference type="ChEBI" id="CHEBI:59789"/>
    </ligand>
</feature>
<feature type="binding site" evidence="1">
    <location>
        <begin position="126"/>
        <end position="127"/>
    </location>
    <ligand>
        <name>S-adenosyl-L-methionine</name>
        <dbReference type="ChEBI" id="CHEBI:59789"/>
    </ligand>
</feature>
<feature type="binding site" evidence="1">
    <location>
        <position position="141"/>
    </location>
    <ligand>
        <name>S-adenosyl-L-methionine</name>
        <dbReference type="ChEBI" id="CHEBI:59789"/>
    </ligand>
</feature>
<protein>
    <recommendedName>
        <fullName evidence="1">Ribosomal RNA small subunit methyltransferase G</fullName>
        <ecNumber evidence="1">2.1.1.170</ecNumber>
    </recommendedName>
    <alternativeName>
        <fullName evidence="1">16S rRNA 7-methylguanosine methyltransferase</fullName>
        <shortName evidence="1">16S rRNA m7G methyltransferase</shortName>
    </alternativeName>
</protein>
<evidence type="ECO:0000255" key="1">
    <source>
        <dbReference type="HAMAP-Rule" id="MF_00074"/>
    </source>
</evidence>
<name>RSMG_PSYIN</name>
<keyword id="KW-0963">Cytoplasm</keyword>
<keyword id="KW-0489">Methyltransferase</keyword>
<keyword id="KW-1185">Reference proteome</keyword>
<keyword id="KW-0698">rRNA processing</keyword>
<keyword id="KW-0949">S-adenosyl-L-methionine</keyword>
<keyword id="KW-0808">Transferase</keyword>
<gene>
    <name evidence="1" type="primary">rsmG</name>
    <name type="ordered locus">Ping_3740</name>
</gene>
<proteinExistence type="inferred from homology"/>
<organism>
    <name type="scientific">Psychromonas ingrahamii (strain DSM 17664 / CCUG 51855 / 37)</name>
    <dbReference type="NCBI Taxonomy" id="357804"/>
    <lineage>
        <taxon>Bacteria</taxon>
        <taxon>Pseudomonadati</taxon>
        <taxon>Pseudomonadota</taxon>
        <taxon>Gammaproteobacteria</taxon>
        <taxon>Alteromonadales</taxon>
        <taxon>Psychromonadaceae</taxon>
        <taxon>Psychromonas</taxon>
    </lineage>
</organism>
<accession>A1T0Z9</accession>